<organism>
    <name type="scientific">Methanocella arvoryzae (strain DSM 22066 / NBRC 105507 / MRE50)</name>
    <dbReference type="NCBI Taxonomy" id="351160"/>
    <lineage>
        <taxon>Archaea</taxon>
        <taxon>Methanobacteriati</taxon>
        <taxon>Methanobacteriota</taxon>
        <taxon>Stenosarchaea group</taxon>
        <taxon>Methanomicrobia</taxon>
        <taxon>Methanocellales</taxon>
        <taxon>Methanocellaceae</taxon>
        <taxon>Methanocella</taxon>
    </lineage>
</organism>
<reference key="1">
    <citation type="journal article" date="2006" name="Science">
        <title>Genome of rice cluster I archaea -- the key methane producers in the rice rhizosphere.</title>
        <authorList>
            <person name="Erkel C."/>
            <person name="Kube M."/>
            <person name="Reinhardt R."/>
            <person name="Liesack W."/>
        </authorList>
    </citation>
    <scope>NUCLEOTIDE SEQUENCE [LARGE SCALE GENOMIC DNA]</scope>
    <source>
        <strain>DSM 22066 / NBRC 105507 / MRE50</strain>
    </source>
</reference>
<protein>
    <recommendedName>
        <fullName evidence="1">DNA-directed RNA polymerase subunit Rpo11</fullName>
        <ecNumber evidence="1">2.7.7.6</ecNumber>
    </recommendedName>
    <alternativeName>
        <fullName evidence="1">DNA-directed RNA polymerase subunit L</fullName>
    </alternativeName>
</protein>
<dbReference type="EC" id="2.7.7.6" evidence="1"/>
<dbReference type="EMBL" id="AM114193">
    <property type="protein sequence ID" value="CAJ35252.1"/>
    <property type="molecule type" value="Genomic_DNA"/>
</dbReference>
<dbReference type="RefSeq" id="WP_012037238.1">
    <property type="nucleotide sequence ID" value="NC_009464.1"/>
</dbReference>
<dbReference type="SMR" id="Q0W8P1"/>
<dbReference type="STRING" id="351160.LRC270"/>
<dbReference type="GeneID" id="5143950"/>
<dbReference type="KEGG" id="rci:LRC270"/>
<dbReference type="eggNOG" id="arCOG04111">
    <property type="taxonomic scope" value="Archaea"/>
</dbReference>
<dbReference type="OrthoDB" id="24205at2157"/>
<dbReference type="Proteomes" id="UP000000663">
    <property type="component" value="Chromosome"/>
</dbReference>
<dbReference type="GO" id="GO:0005737">
    <property type="term" value="C:cytoplasm"/>
    <property type="evidence" value="ECO:0007669"/>
    <property type="project" value="UniProtKB-SubCell"/>
</dbReference>
<dbReference type="GO" id="GO:0000428">
    <property type="term" value="C:DNA-directed RNA polymerase complex"/>
    <property type="evidence" value="ECO:0007669"/>
    <property type="project" value="UniProtKB-KW"/>
</dbReference>
<dbReference type="GO" id="GO:0003899">
    <property type="term" value="F:DNA-directed RNA polymerase activity"/>
    <property type="evidence" value="ECO:0007669"/>
    <property type="project" value="UniProtKB-UniRule"/>
</dbReference>
<dbReference type="GO" id="GO:0046983">
    <property type="term" value="F:protein dimerization activity"/>
    <property type="evidence" value="ECO:0007669"/>
    <property type="project" value="InterPro"/>
</dbReference>
<dbReference type="GO" id="GO:0006351">
    <property type="term" value="P:DNA-templated transcription"/>
    <property type="evidence" value="ECO:0007669"/>
    <property type="project" value="UniProtKB-UniRule"/>
</dbReference>
<dbReference type="CDD" id="cd06927">
    <property type="entry name" value="RNAP_L"/>
    <property type="match status" value="1"/>
</dbReference>
<dbReference type="Gene3D" id="3.30.1360.10">
    <property type="entry name" value="RNA polymerase, RBP11-like subunit"/>
    <property type="match status" value="1"/>
</dbReference>
<dbReference type="HAMAP" id="MF_00261">
    <property type="entry name" value="RNApol_arch_Rpo11"/>
    <property type="match status" value="1"/>
</dbReference>
<dbReference type="InterPro" id="IPR036603">
    <property type="entry name" value="RBP11-like"/>
</dbReference>
<dbReference type="InterPro" id="IPR009025">
    <property type="entry name" value="RBP11-like_dimer"/>
</dbReference>
<dbReference type="InterPro" id="IPR022905">
    <property type="entry name" value="Rpo11-like"/>
</dbReference>
<dbReference type="NCBIfam" id="NF002237">
    <property type="entry name" value="PRK01146.2-1"/>
    <property type="match status" value="1"/>
</dbReference>
<dbReference type="PANTHER" id="PTHR13946">
    <property type="entry name" value="DNA-DIRECTED RNA POLYMERASE I,II,III"/>
    <property type="match status" value="1"/>
</dbReference>
<dbReference type="PANTHER" id="PTHR13946:SF28">
    <property type="entry name" value="DNA-DIRECTED RNA POLYMERASES I AND III SUBUNIT RPAC2"/>
    <property type="match status" value="1"/>
</dbReference>
<dbReference type="Pfam" id="PF13656">
    <property type="entry name" value="RNA_pol_L_2"/>
    <property type="match status" value="1"/>
</dbReference>
<dbReference type="SUPFAM" id="SSF55257">
    <property type="entry name" value="RBP11-like subunits of RNA polymerase"/>
    <property type="match status" value="1"/>
</dbReference>
<sequence>MEIKILNKTDTEIQVEIKGESHTMMNALKSCLLEDKAVKVATYDIEFPGISDPVLYVRTDKSEDPIDAIKVAAKKLADECDDFLKIFGKKAKA</sequence>
<comment type="function">
    <text evidence="1">DNA-dependent RNA polymerase (RNAP) catalyzes the transcription of DNA into RNA using the four ribonucleoside triphosphates as substrates.</text>
</comment>
<comment type="catalytic activity">
    <reaction evidence="1">
        <text>RNA(n) + a ribonucleoside 5'-triphosphate = RNA(n+1) + diphosphate</text>
        <dbReference type="Rhea" id="RHEA:21248"/>
        <dbReference type="Rhea" id="RHEA-COMP:14527"/>
        <dbReference type="Rhea" id="RHEA-COMP:17342"/>
        <dbReference type="ChEBI" id="CHEBI:33019"/>
        <dbReference type="ChEBI" id="CHEBI:61557"/>
        <dbReference type="ChEBI" id="CHEBI:140395"/>
        <dbReference type="EC" id="2.7.7.6"/>
    </reaction>
</comment>
<comment type="subunit">
    <text evidence="1">Part of the RNA polymerase complex.</text>
</comment>
<comment type="subcellular location">
    <subcellularLocation>
        <location evidence="1">Cytoplasm</location>
    </subcellularLocation>
</comment>
<comment type="similarity">
    <text evidence="1">Belongs to the archaeal Rpo11/eukaryotic RPB11/RPC19 RNA polymerase subunit family.</text>
</comment>
<accession>Q0W8P1</accession>
<keyword id="KW-0963">Cytoplasm</keyword>
<keyword id="KW-0240">DNA-directed RNA polymerase</keyword>
<keyword id="KW-0548">Nucleotidyltransferase</keyword>
<keyword id="KW-1185">Reference proteome</keyword>
<keyword id="KW-0804">Transcription</keyword>
<keyword id="KW-0808">Transferase</keyword>
<name>RPO11_METAR</name>
<proteinExistence type="inferred from homology"/>
<feature type="chain" id="PRO_1000005786" description="DNA-directed RNA polymerase subunit Rpo11">
    <location>
        <begin position="1"/>
        <end position="93"/>
    </location>
</feature>
<gene>
    <name evidence="1" type="primary">rpo11</name>
    <name evidence="1" type="synonym">rpoL</name>
    <name type="ordered locus">UNCMA_29230</name>
    <name type="ORF">LRC270</name>
</gene>
<evidence type="ECO:0000255" key="1">
    <source>
        <dbReference type="HAMAP-Rule" id="MF_00261"/>
    </source>
</evidence>